<proteinExistence type="inferred from homology"/>
<gene>
    <name type="ordered locus">SPP_0248</name>
</gene>
<organism>
    <name type="scientific">Streptococcus pneumoniae (strain P1031)</name>
    <dbReference type="NCBI Taxonomy" id="488223"/>
    <lineage>
        <taxon>Bacteria</taxon>
        <taxon>Bacillati</taxon>
        <taxon>Bacillota</taxon>
        <taxon>Bacilli</taxon>
        <taxon>Lactobacillales</taxon>
        <taxon>Streptococcaceae</taxon>
        <taxon>Streptococcus</taxon>
    </lineage>
</organism>
<comment type="similarity">
    <text evidence="1">Belongs to the UPF0473 family.</text>
</comment>
<reference key="1">
    <citation type="journal article" date="2010" name="Genome Biol.">
        <title>Structure and dynamics of the pan-genome of Streptococcus pneumoniae and closely related species.</title>
        <authorList>
            <person name="Donati C."/>
            <person name="Hiller N.L."/>
            <person name="Tettelin H."/>
            <person name="Muzzi A."/>
            <person name="Croucher N.J."/>
            <person name="Angiuoli S.V."/>
            <person name="Oggioni M."/>
            <person name="Dunning Hotopp J.C."/>
            <person name="Hu F.Z."/>
            <person name="Riley D.R."/>
            <person name="Covacci A."/>
            <person name="Mitchell T.J."/>
            <person name="Bentley S.D."/>
            <person name="Kilian M."/>
            <person name="Ehrlich G.D."/>
            <person name="Rappuoli R."/>
            <person name="Moxon E.R."/>
            <person name="Masignani V."/>
        </authorList>
    </citation>
    <scope>NUCLEOTIDE SEQUENCE [LARGE SCALE GENOMIC DNA]</scope>
    <source>
        <strain>P1031</strain>
    </source>
</reference>
<dbReference type="EMBL" id="CP000920">
    <property type="protein sequence ID" value="ACO20419.1"/>
    <property type="molecule type" value="Genomic_DNA"/>
</dbReference>
<dbReference type="RefSeq" id="WP_000017620.1">
    <property type="nucleotide sequence ID" value="NC_012467.1"/>
</dbReference>
<dbReference type="KEGG" id="spp:SPP_0248"/>
<dbReference type="HOGENOM" id="CLU_146610_2_1_9"/>
<dbReference type="HAMAP" id="MF_01448">
    <property type="entry name" value="UPF0473"/>
    <property type="match status" value="1"/>
</dbReference>
<dbReference type="InterPro" id="IPR009711">
    <property type="entry name" value="UPF0473"/>
</dbReference>
<dbReference type="NCBIfam" id="NF010215">
    <property type="entry name" value="PRK13678.1-2"/>
    <property type="match status" value="1"/>
</dbReference>
<dbReference type="NCBIfam" id="NF010217">
    <property type="entry name" value="PRK13678.1-4"/>
    <property type="match status" value="1"/>
</dbReference>
<dbReference type="PANTHER" id="PTHR40066">
    <property type="entry name" value="UPF0473 PROTEIN CBO2561/CLC_2432"/>
    <property type="match status" value="1"/>
</dbReference>
<dbReference type="PANTHER" id="PTHR40066:SF1">
    <property type="entry name" value="UPF0473 PROTEIN CBO2561_CLC_2432"/>
    <property type="match status" value="1"/>
</dbReference>
<dbReference type="Pfam" id="PF06949">
    <property type="entry name" value="DUF1292"/>
    <property type="match status" value="1"/>
</dbReference>
<feature type="chain" id="PRO_1000185002" description="UPF0473 protein SPP_0248">
    <location>
        <begin position="1"/>
        <end position="101"/>
    </location>
</feature>
<name>Y248_STRZP</name>
<sequence length="101" mass="11759">MSHDHNHDHEERELITLVDEQGNETLFEILLTIDGKEEFGKNYVLLVPVNAEEDEDGQVEIQAYSFIENEDGTEGELQPIPEDSEDEWNMIEEVFNSFMEE</sequence>
<protein>
    <recommendedName>
        <fullName evidence="1">UPF0473 protein SPP_0248</fullName>
    </recommendedName>
</protein>
<accession>C1CI85</accession>
<evidence type="ECO:0000255" key="1">
    <source>
        <dbReference type="HAMAP-Rule" id="MF_01448"/>
    </source>
</evidence>